<keyword id="KW-0665">Pyrimidine biosynthesis</keyword>
<keyword id="KW-0808">Transferase</keyword>
<protein>
    <recommendedName>
        <fullName evidence="1">Aspartate carbamoyltransferase catalytic subunit</fullName>
        <ecNumber evidence="1">2.1.3.2</ecNumber>
    </recommendedName>
    <alternativeName>
        <fullName evidence="1">Aspartate transcarbamylase</fullName>
        <shortName evidence="1">ATCase</shortName>
    </alternativeName>
</protein>
<sequence length="302" mass="33015">MRHLLDFQGWSRTEVESLLDTARVMREVLERPIKKVPALQGFTVATVFFEPSTRTRISFELAARRMSADVVSFAAQTSSLQKGESYKDTLLTLEAMGVDAYVIRADSAGVPHQATRWVKGAVINGGDGRRAHPTQALLDAYTLLEALGTLEGKKVAIVGDILHSRVARSGAELLSLLGAQVFCAGPPSLLPQSLPGAHLTPRLEEALEEADAVMVLRLQKERMEAGLVHLEDYVARYQVTEKRLALAKPQAPLLHPGPMNRDVELEGTLADSARSLVNRQVQNGVAVRMAVLYHLLVGREKA</sequence>
<organism>
    <name type="scientific">Thermus thermophilus (strain ATCC BAA-163 / DSM 7039 / HB27)</name>
    <dbReference type="NCBI Taxonomy" id="262724"/>
    <lineage>
        <taxon>Bacteria</taxon>
        <taxon>Thermotogati</taxon>
        <taxon>Deinococcota</taxon>
        <taxon>Deinococci</taxon>
        <taxon>Thermales</taxon>
        <taxon>Thermaceae</taxon>
        <taxon>Thermus</taxon>
    </lineage>
</organism>
<gene>
    <name evidence="1" type="primary">pyrB</name>
    <name type="ordered locus">TT_C0427</name>
</gene>
<reference key="1">
    <citation type="journal article" date="2004" name="Nat. Biotechnol.">
        <title>The genome sequence of the extreme thermophile Thermus thermophilus.</title>
        <authorList>
            <person name="Henne A."/>
            <person name="Brueggemann H."/>
            <person name="Raasch C."/>
            <person name="Wiezer A."/>
            <person name="Hartsch T."/>
            <person name="Liesegang H."/>
            <person name="Johann A."/>
            <person name="Lienard T."/>
            <person name="Gohl O."/>
            <person name="Martinez-Arias R."/>
            <person name="Jacobi C."/>
            <person name="Starkuviene V."/>
            <person name="Schlenczeck S."/>
            <person name="Dencker S."/>
            <person name="Huber R."/>
            <person name="Klenk H.-P."/>
            <person name="Kramer W."/>
            <person name="Merkl R."/>
            <person name="Gottschalk G."/>
            <person name="Fritz H.-J."/>
        </authorList>
    </citation>
    <scope>NUCLEOTIDE SEQUENCE [LARGE SCALE GENOMIC DNA]</scope>
    <source>
        <strain>ATCC BAA-163 / DSM 7039 / HB27</strain>
    </source>
</reference>
<name>PYRB_THET2</name>
<feature type="chain" id="PRO_0000113220" description="Aspartate carbamoyltransferase catalytic subunit">
    <location>
        <begin position="1"/>
        <end position="302"/>
    </location>
</feature>
<feature type="binding site" evidence="1">
    <location>
        <position position="54"/>
    </location>
    <ligand>
        <name>carbamoyl phosphate</name>
        <dbReference type="ChEBI" id="CHEBI:58228"/>
    </ligand>
</feature>
<feature type="binding site" evidence="1">
    <location>
        <position position="55"/>
    </location>
    <ligand>
        <name>carbamoyl phosphate</name>
        <dbReference type="ChEBI" id="CHEBI:58228"/>
    </ligand>
</feature>
<feature type="binding site" evidence="1">
    <location>
        <position position="82"/>
    </location>
    <ligand>
        <name>L-aspartate</name>
        <dbReference type="ChEBI" id="CHEBI:29991"/>
    </ligand>
</feature>
<feature type="binding site" evidence="1">
    <location>
        <position position="104"/>
    </location>
    <ligand>
        <name>carbamoyl phosphate</name>
        <dbReference type="ChEBI" id="CHEBI:58228"/>
    </ligand>
</feature>
<feature type="binding site" evidence="1">
    <location>
        <position position="132"/>
    </location>
    <ligand>
        <name>carbamoyl phosphate</name>
        <dbReference type="ChEBI" id="CHEBI:58228"/>
    </ligand>
</feature>
<feature type="binding site" evidence="1">
    <location>
        <position position="135"/>
    </location>
    <ligand>
        <name>carbamoyl phosphate</name>
        <dbReference type="ChEBI" id="CHEBI:58228"/>
    </ligand>
</feature>
<feature type="binding site" evidence="1">
    <location>
        <position position="165"/>
    </location>
    <ligand>
        <name>L-aspartate</name>
        <dbReference type="ChEBI" id="CHEBI:29991"/>
    </ligand>
</feature>
<feature type="binding site" evidence="1">
    <location>
        <position position="217"/>
    </location>
    <ligand>
        <name>L-aspartate</name>
        <dbReference type="ChEBI" id="CHEBI:29991"/>
    </ligand>
</feature>
<feature type="binding site" evidence="1">
    <location>
        <position position="257"/>
    </location>
    <ligand>
        <name>carbamoyl phosphate</name>
        <dbReference type="ChEBI" id="CHEBI:58228"/>
    </ligand>
</feature>
<feature type="binding site" evidence="1">
    <location>
        <position position="258"/>
    </location>
    <ligand>
        <name>carbamoyl phosphate</name>
        <dbReference type="ChEBI" id="CHEBI:58228"/>
    </ligand>
</feature>
<dbReference type="EC" id="2.1.3.2" evidence="1"/>
<dbReference type="EMBL" id="AE017221">
    <property type="protein sequence ID" value="AAS80775.1"/>
    <property type="molecule type" value="Genomic_DNA"/>
</dbReference>
<dbReference type="RefSeq" id="WP_011172874.1">
    <property type="nucleotide sequence ID" value="NC_005835.1"/>
</dbReference>
<dbReference type="SMR" id="Q72KU0"/>
<dbReference type="GeneID" id="3169148"/>
<dbReference type="KEGG" id="tth:TT_C0427"/>
<dbReference type="eggNOG" id="COG0540">
    <property type="taxonomic scope" value="Bacteria"/>
</dbReference>
<dbReference type="HOGENOM" id="CLU_043846_2_0_0"/>
<dbReference type="OrthoDB" id="9802587at2"/>
<dbReference type="UniPathway" id="UPA00070">
    <property type="reaction ID" value="UER00116"/>
</dbReference>
<dbReference type="Proteomes" id="UP000000592">
    <property type="component" value="Chromosome"/>
</dbReference>
<dbReference type="GO" id="GO:0005829">
    <property type="term" value="C:cytosol"/>
    <property type="evidence" value="ECO:0007669"/>
    <property type="project" value="TreeGrafter"/>
</dbReference>
<dbReference type="GO" id="GO:0016597">
    <property type="term" value="F:amino acid binding"/>
    <property type="evidence" value="ECO:0007669"/>
    <property type="project" value="InterPro"/>
</dbReference>
<dbReference type="GO" id="GO:0004070">
    <property type="term" value="F:aspartate carbamoyltransferase activity"/>
    <property type="evidence" value="ECO:0007669"/>
    <property type="project" value="UniProtKB-UniRule"/>
</dbReference>
<dbReference type="GO" id="GO:0006207">
    <property type="term" value="P:'de novo' pyrimidine nucleobase biosynthetic process"/>
    <property type="evidence" value="ECO:0007669"/>
    <property type="project" value="InterPro"/>
</dbReference>
<dbReference type="GO" id="GO:0044205">
    <property type="term" value="P:'de novo' UMP biosynthetic process"/>
    <property type="evidence" value="ECO:0007669"/>
    <property type="project" value="UniProtKB-UniRule"/>
</dbReference>
<dbReference type="GO" id="GO:0006520">
    <property type="term" value="P:amino acid metabolic process"/>
    <property type="evidence" value="ECO:0007669"/>
    <property type="project" value="InterPro"/>
</dbReference>
<dbReference type="Gene3D" id="3.40.50.1370">
    <property type="entry name" value="Aspartate/ornithine carbamoyltransferase"/>
    <property type="match status" value="2"/>
</dbReference>
<dbReference type="HAMAP" id="MF_00001">
    <property type="entry name" value="Asp_carb_tr"/>
    <property type="match status" value="1"/>
</dbReference>
<dbReference type="InterPro" id="IPR006132">
    <property type="entry name" value="Asp/Orn_carbamoyltranf_P-bd"/>
</dbReference>
<dbReference type="InterPro" id="IPR006130">
    <property type="entry name" value="Asp/Orn_carbamoylTrfase"/>
</dbReference>
<dbReference type="InterPro" id="IPR036901">
    <property type="entry name" value="Asp/Orn_carbamoylTrfase_sf"/>
</dbReference>
<dbReference type="InterPro" id="IPR002082">
    <property type="entry name" value="Asp_carbamoyltransf"/>
</dbReference>
<dbReference type="InterPro" id="IPR006131">
    <property type="entry name" value="Asp_carbamoyltransf_Asp/Orn-bd"/>
</dbReference>
<dbReference type="NCBIfam" id="TIGR00670">
    <property type="entry name" value="asp_carb_tr"/>
    <property type="match status" value="1"/>
</dbReference>
<dbReference type="NCBIfam" id="NF002032">
    <property type="entry name" value="PRK00856.1"/>
    <property type="match status" value="1"/>
</dbReference>
<dbReference type="PANTHER" id="PTHR45753:SF6">
    <property type="entry name" value="ASPARTATE CARBAMOYLTRANSFERASE"/>
    <property type="match status" value="1"/>
</dbReference>
<dbReference type="PANTHER" id="PTHR45753">
    <property type="entry name" value="ORNITHINE CARBAMOYLTRANSFERASE, MITOCHONDRIAL"/>
    <property type="match status" value="1"/>
</dbReference>
<dbReference type="Pfam" id="PF00185">
    <property type="entry name" value="OTCace"/>
    <property type="match status" value="1"/>
</dbReference>
<dbReference type="Pfam" id="PF02729">
    <property type="entry name" value="OTCace_N"/>
    <property type="match status" value="1"/>
</dbReference>
<dbReference type="PRINTS" id="PR00100">
    <property type="entry name" value="AOTCASE"/>
</dbReference>
<dbReference type="PRINTS" id="PR00101">
    <property type="entry name" value="ATCASE"/>
</dbReference>
<dbReference type="SUPFAM" id="SSF53671">
    <property type="entry name" value="Aspartate/ornithine carbamoyltransferase"/>
    <property type="match status" value="1"/>
</dbReference>
<dbReference type="PROSITE" id="PS00097">
    <property type="entry name" value="CARBAMOYLTRANSFERASE"/>
    <property type="match status" value="1"/>
</dbReference>
<accession>Q72KU0</accession>
<evidence type="ECO:0000255" key="1">
    <source>
        <dbReference type="HAMAP-Rule" id="MF_00001"/>
    </source>
</evidence>
<proteinExistence type="inferred from homology"/>
<comment type="function">
    <text evidence="1">Catalyzes the condensation of carbamoyl phosphate and aspartate to form carbamoyl aspartate and inorganic phosphate, the committed step in the de novo pyrimidine nucleotide biosynthesis pathway.</text>
</comment>
<comment type="catalytic activity">
    <reaction evidence="1">
        <text>carbamoyl phosphate + L-aspartate = N-carbamoyl-L-aspartate + phosphate + H(+)</text>
        <dbReference type="Rhea" id="RHEA:20013"/>
        <dbReference type="ChEBI" id="CHEBI:15378"/>
        <dbReference type="ChEBI" id="CHEBI:29991"/>
        <dbReference type="ChEBI" id="CHEBI:32814"/>
        <dbReference type="ChEBI" id="CHEBI:43474"/>
        <dbReference type="ChEBI" id="CHEBI:58228"/>
        <dbReference type="EC" id="2.1.3.2"/>
    </reaction>
</comment>
<comment type="pathway">
    <text evidence="1">Pyrimidine metabolism; UMP biosynthesis via de novo pathway; (S)-dihydroorotate from bicarbonate: step 2/3.</text>
</comment>
<comment type="subunit">
    <text evidence="1">Heterododecamer (2C3:3R2) of six catalytic PyrB chains organized as two trimers (C3), and six regulatory PyrI chains organized as three dimers (R2).</text>
</comment>
<comment type="similarity">
    <text evidence="1">Belongs to the aspartate/ornithine carbamoyltransferase superfamily. ATCase family.</text>
</comment>